<feature type="chain" id="PRO_0000399374" description="3'-5' exonuclease">
    <location>
        <begin position="1"/>
        <end position="354"/>
    </location>
</feature>
<feature type="domain" description="3'-5' exonuclease" evidence="3">
    <location>
        <begin position="146"/>
        <end position="314"/>
    </location>
</feature>
<feature type="region of interest" description="Disordered" evidence="4">
    <location>
        <begin position="1"/>
        <end position="120"/>
    </location>
</feature>
<feature type="compositionally biased region" description="Basic and acidic residues" evidence="4">
    <location>
        <begin position="13"/>
        <end position="23"/>
    </location>
</feature>
<feature type="compositionally biased region" description="Basic and acidic residues" evidence="4">
    <location>
        <begin position="36"/>
        <end position="50"/>
    </location>
</feature>
<feature type="compositionally biased region" description="Basic and acidic residues" evidence="4">
    <location>
        <begin position="71"/>
        <end position="91"/>
    </location>
</feature>
<feature type="binding site" evidence="2">
    <location>
        <position position="163"/>
    </location>
    <ligand>
        <name>Mg(2+)</name>
        <dbReference type="ChEBI" id="CHEBI:18420"/>
        <label>1</label>
        <note>catalytic</note>
    </ligand>
</feature>
<feature type="binding site" evidence="2">
    <location>
        <position position="163"/>
    </location>
    <ligand>
        <name>Mg(2+)</name>
        <dbReference type="ChEBI" id="CHEBI:18420"/>
        <label>2</label>
        <note>catalytic</note>
    </ligand>
</feature>
<feature type="binding site" evidence="2">
    <location>
        <position position="165"/>
    </location>
    <ligand>
        <name>Mg(2+)</name>
        <dbReference type="ChEBI" id="CHEBI:18420"/>
        <label>1</label>
        <note>catalytic</note>
    </ligand>
</feature>
<feature type="binding site" evidence="1">
    <location>
        <position position="301"/>
    </location>
    <ligand>
        <name>Mg(2+)</name>
        <dbReference type="ChEBI" id="CHEBI:18420"/>
        <label>1</label>
        <note>catalytic</note>
    </ligand>
</feature>
<feature type="modified residue" description="Phosphoserine" evidence="2">
    <location>
        <position position="104"/>
    </location>
</feature>
<feature type="modified residue" description="Phosphoserine" evidence="2">
    <location>
        <position position="110"/>
    </location>
</feature>
<feature type="modified residue" description="Phosphoserine" evidence="2">
    <location>
        <position position="112"/>
    </location>
</feature>
<gene>
    <name evidence="2" type="primary">WRNexo</name>
    <name type="ORF">GG16480</name>
</gene>
<accession>B3NZ68</accession>
<sequence length="354" mass="40369">MEKYLIKMPIKSKASEVPKDKAVVKQGTPKIRSKVTKNDTPKELKNKENAGEDNTPKQTNGRLGRPAGKRKNLDTPETKAEKIATEEENPPKRRSSRLTRSTRSMAEDGSPSPEKEKPEKLPFIKYKGAIKYYTESQDIAASADDVLQWVEKQKDEVVPMAFDMEWPFSFQTGPGKSAVIQICVDEKCCYIYQLTNLKKLPAVLVALINHSKVRLHGVNIKNDFRKLARDFPEVSAEPLIEKCVDLGVWCNEVCETGGRWSLERLTNFIAKKAMDKSKKVRMSKWHVIPLDENQLMYAAIDVYIGQVIYRELERREKAKIINEEEFKEKNGEAAFKAMKTLGETFLSKINEVTL</sequence>
<name>WRNXO_DROER</name>
<evidence type="ECO:0000250" key="1">
    <source>
        <dbReference type="UniProtKB" id="Q14191"/>
    </source>
</evidence>
<evidence type="ECO:0000250" key="2">
    <source>
        <dbReference type="UniProtKB" id="Q9VE86"/>
    </source>
</evidence>
<evidence type="ECO:0000255" key="3"/>
<evidence type="ECO:0000256" key="4">
    <source>
        <dbReference type="SAM" id="MobiDB-lite"/>
    </source>
</evidence>
<evidence type="ECO:0000305" key="5"/>
<evidence type="ECO:0000312" key="6">
    <source>
        <dbReference type="EMBL" id="EDV48610.1"/>
    </source>
</evidence>
<protein>
    <recommendedName>
        <fullName evidence="2">3'-5' exonuclease</fullName>
        <ecNumber>3.1.11.-</ecNumber>
    </recommendedName>
    <alternativeName>
        <fullName>Werner Syndrome-like exonuclease</fullName>
    </alternativeName>
</protein>
<comment type="function">
    <text evidence="2">Has exonuclease activity on both single-stranded and duplex templates bearing overhangs, but not blunt ended duplex DNA, and cleaves in a 3'-5' direction. Essential for the formation of DNA replication focal centers. Has an important role in maintaining genome stability.</text>
</comment>
<comment type="subcellular location">
    <subcellularLocation>
        <location evidence="2">Nucleus</location>
    </subcellularLocation>
</comment>
<comment type="similarity">
    <text evidence="5">Belongs to the WRNexo family.</text>
</comment>
<keyword id="KW-0269">Exonuclease</keyword>
<keyword id="KW-0378">Hydrolase</keyword>
<keyword id="KW-0460">Magnesium</keyword>
<keyword id="KW-0479">Metal-binding</keyword>
<keyword id="KW-0540">Nuclease</keyword>
<keyword id="KW-0539">Nucleus</keyword>
<keyword id="KW-0597">Phosphoprotein</keyword>
<proteinExistence type="inferred from homology"/>
<dbReference type="EC" id="3.1.11.-"/>
<dbReference type="EMBL" id="CH954181">
    <property type="protein sequence ID" value="EDV48610.1"/>
    <property type="molecule type" value="Genomic_DNA"/>
</dbReference>
<dbReference type="SMR" id="B3NZ68"/>
<dbReference type="GeneID" id="6551855"/>
<dbReference type="KEGG" id="der:6551855"/>
<dbReference type="eggNOG" id="KOG4373">
    <property type="taxonomic scope" value="Eukaryota"/>
</dbReference>
<dbReference type="HOGENOM" id="CLU_845357_0_0_1"/>
<dbReference type="OMA" id="CCYVYQL"/>
<dbReference type="OrthoDB" id="10261556at2759"/>
<dbReference type="PhylomeDB" id="B3NZ68"/>
<dbReference type="ChiTaRS" id="WRNexo">
    <property type="organism name" value="fly"/>
</dbReference>
<dbReference type="Proteomes" id="UP000008711">
    <property type="component" value="Unassembled WGS sequence"/>
</dbReference>
<dbReference type="GO" id="GO:0005634">
    <property type="term" value="C:nucleus"/>
    <property type="evidence" value="ECO:0000250"/>
    <property type="project" value="UniProtKB"/>
</dbReference>
<dbReference type="GO" id="GO:0008408">
    <property type="term" value="F:3'-5' exonuclease activity"/>
    <property type="evidence" value="ECO:0000250"/>
    <property type="project" value="UniProtKB"/>
</dbReference>
<dbReference type="GO" id="GO:0046872">
    <property type="term" value="F:metal ion binding"/>
    <property type="evidence" value="ECO:0007669"/>
    <property type="project" value="UniProtKB-KW"/>
</dbReference>
<dbReference type="GO" id="GO:0003676">
    <property type="term" value="F:nucleic acid binding"/>
    <property type="evidence" value="ECO:0007669"/>
    <property type="project" value="InterPro"/>
</dbReference>
<dbReference type="GO" id="GO:0045950">
    <property type="term" value="P:negative regulation of mitotic recombination"/>
    <property type="evidence" value="ECO:0000250"/>
    <property type="project" value="UniProtKB"/>
</dbReference>
<dbReference type="GO" id="GO:0006139">
    <property type="term" value="P:nucleobase-containing compound metabolic process"/>
    <property type="evidence" value="ECO:0007669"/>
    <property type="project" value="InterPro"/>
</dbReference>
<dbReference type="CDD" id="cd06141">
    <property type="entry name" value="WRN_exo"/>
    <property type="match status" value="1"/>
</dbReference>
<dbReference type="FunFam" id="3.30.420.10:FF:000104">
    <property type="entry name" value="Werner Syndrome-like exonuclease"/>
    <property type="match status" value="1"/>
</dbReference>
<dbReference type="Gene3D" id="3.30.420.10">
    <property type="entry name" value="Ribonuclease H-like superfamily/Ribonuclease H"/>
    <property type="match status" value="1"/>
</dbReference>
<dbReference type="InterPro" id="IPR002562">
    <property type="entry name" value="3'-5'_exonuclease_dom"/>
</dbReference>
<dbReference type="InterPro" id="IPR051132">
    <property type="entry name" value="3-5_Exonuclease_domain"/>
</dbReference>
<dbReference type="InterPro" id="IPR012337">
    <property type="entry name" value="RNaseH-like_sf"/>
</dbReference>
<dbReference type="InterPro" id="IPR036397">
    <property type="entry name" value="RNaseH_sf"/>
</dbReference>
<dbReference type="PANTHER" id="PTHR13620:SF109">
    <property type="entry name" value="3'-5' EXONUCLEASE"/>
    <property type="match status" value="1"/>
</dbReference>
<dbReference type="PANTHER" id="PTHR13620">
    <property type="entry name" value="3-5 EXONUCLEASE"/>
    <property type="match status" value="1"/>
</dbReference>
<dbReference type="Pfam" id="PF01612">
    <property type="entry name" value="DNA_pol_A_exo1"/>
    <property type="match status" value="1"/>
</dbReference>
<dbReference type="SMART" id="SM00474">
    <property type="entry name" value="35EXOc"/>
    <property type="match status" value="1"/>
</dbReference>
<dbReference type="SUPFAM" id="SSF53098">
    <property type="entry name" value="Ribonuclease H-like"/>
    <property type="match status" value="1"/>
</dbReference>
<reference evidence="6" key="1">
    <citation type="journal article" date="2007" name="Nature">
        <title>Evolution of genes and genomes on the Drosophila phylogeny.</title>
        <authorList>
            <consortium name="Drosophila 12 genomes consortium"/>
        </authorList>
    </citation>
    <scope>NUCLEOTIDE SEQUENCE [LARGE SCALE GENOMIC DNA]</scope>
    <source>
        <strain evidence="6">Tucson 14021-0224.01</strain>
    </source>
</reference>
<organism>
    <name type="scientific">Drosophila erecta</name>
    <name type="common">Fruit fly</name>
    <dbReference type="NCBI Taxonomy" id="7220"/>
    <lineage>
        <taxon>Eukaryota</taxon>
        <taxon>Metazoa</taxon>
        <taxon>Ecdysozoa</taxon>
        <taxon>Arthropoda</taxon>
        <taxon>Hexapoda</taxon>
        <taxon>Insecta</taxon>
        <taxon>Pterygota</taxon>
        <taxon>Neoptera</taxon>
        <taxon>Endopterygota</taxon>
        <taxon>Diptera</taxon>
        <taxon>Brachycera</taxon>
        <taxon>Muscomorpha</taxon>
        <taxon>Ephydroidea</taxon>
        <taxon>Drosophilidae</taxon>
        <taxon>Drosophila</taxon>
        <taxon>Sophophora</taxon>
    </lineage>
</organism>